<evidence type="ECO:0000255" key="1">
    <source>
        <dbReference type="HAMAP-Rule" id="MF_01216"/>
    </source>
</evidence>
<name>AZOR_SHIBS</name>
<accession>Q320H8</accession>
<reference key="1">
    <citation type="journal article" date="2005" name="Nucleic Acids Res.">
        <title>Genome dynamics and diversity of Shigella species, the etiologic agents of bacillary dysentery.</title>
        <authorList>
            <person name="Yang F."/>
            <person name="Yang J."/>
            <person name="Zhang X."/>
            <person name="Chen L."/>
            <person name="Jiang Y."/>
            <person name="Yan Y."/>
            <person name="Tang X."/>
            <person name="Wang J."/>
            <person name="Xiong Z."/>
            <person name="Dong J."/>
            <person name="Xue Y."/>
            <person name="Zhu Y."/>
            <person name="Xu X."/>
            <person name="Sun L."/>
            <person name="Chen S."/>
            <person name="Nie H."/>
            <person name="Peng J."/>
            <person name="Xu J."/>
            <person name="Wang Y."/>
            <person name="Yuan Z."/>
            <person name="Wen Y."/>
            <person name="Yao Z."/>
            <person name="Shen Y."/>
            <person name="Qiang B."/>
            <person name="Hou Y."/>
            <person name="Yu J."/>
            <person name="Jin Q."/>
        </authorList>
    </citation>
    <scope>NUCLEOTIDE SEQUENCE [LARGE SCALE GENOMIC DNA]</scope>
    <source>
        <strain>Sb227</strain>
    </source>
</reference>
<dbReference type="EC" id="1.6.5.-" evidence="1"/>
<dbReference type="EC" id="1.7.1.17" evidence="1"/>
<dbReference type="EMBL" id="CP000036">
    <property type="protein sequence ID" value="ABB66280.1"/>
    <property type="molecule type" value="Genomic_DNA"/>
</dbReference>
<dbReference type="RefSeq" id="WP_000048948.1">
    <property type="nucleotide sequence ID" value="NC_007613.1"/>
</dbReference>
<dbReference type="SMR" id="Q320H8"/>
<dbReference type="GeneID" id="93775555"/>
<dbReference type="KEGG" id="sbo:SBO_1675"/>
<dbReference type="HOGENOM" id="CLU_088964_0_0_6"/>
<dbReference type="Proteomes" id="UP000007067">
    <property type="component" value="Chromosome"/>
</dbReference>
<dbReference type="GO" id="GO:0009055">
    <property type="term" value="F:electron transfer activity"/>
    <property type="evidence" value="ECO:0007669"/>
    <property type="project" value="UniProtKB-UniRule"/>
</dbReference>
<dbReference type="GO" id="GO:0010181">
    <property type="term" value="F:FMN binding"/>
    <property type="evidence" value="ECO:0007669"/>
    <property type="project" value="UniProtKB-UniRule"/>
</dbReference>
<dbReference type="GO" id="GO:0016652">
    <property type="term" value="F:oxidoreductase activity, acting on NAD(P)H as acceptor"/>
    <property type="evidence" value="ECO:0007669"/>
    <property type="project" value="UniProtKB-UniRule"/>
</dbReference>
<dbReference type="GO" id="GO:0016655">
    <property type="term" value="F:oxidoreductase activity, acting on NAD(P)H, quinone or similar compound as acceptor"/>
    <property type="evidence" value="ECO:0007669"/>
    <property type="project" value="InterPro"/>
</dbReference>
<dbReference type="FunFam" id="3.40.50.360:FF:000010">
    <property type="entry name" value="FMN-dependent NADH-azoreductase"/>
    <property type="match status" value="1"/>
</dbReference>
<dbReference type="Gene3D" id="3.40.50.360">
    <property type="match status" value="1"/>
</dbReference>
<dbReference type="HAMAP" id="MF_01216">
    <property type="entry name" value="Azoreductase_type1"/>
    <property type="match status" value="1"/>
</dbReference>
<dbReference type="InterPro" id="IPR003680">
    <property type="entry name" value="Flavodoxin_fold"/>
</dbReference>
<dbReference type="InterPro" id="IPR029039">
    <property type="entry name" value="Flavoprotein-like_sf"/>
</dbReference>
<dbReference type="InterPro" id="IPR050104">
    <property type="entry name" value="FMN-dep_NADH:Q_OxRdtase_AzoR1"/>
</dbReference>
<dbReference type="InterPro" id="IPR023048">
    <property type="entry name" value="NADH:quinone_OxRdtase_FMN_depd"/>
</dbReference>
<dbReference type="PANTHER" id="PTHR43741">
    <property type="entry name" value="FMN-DEPENDENT NADH-AZOREDUCTASE 1"/>
    <property type="match status" value="1"/>
</dbReference>
<dbReference type="PANTHER" id="PTHR43741:SF2">
    <property type="entry name" value="FMN-DEPENDENT NADH:QUINONE OXIDOREDUCTASE"/>
    <property type="match status" value="1"/>
</dbReference>
<dbReference type="Pfam" id="PF02525">
    <property type="entry name" value="Flavodoxin_2"/>
    <property type="match status" value="1"/>
</dbReference>
<dbReference type="SUPFAM" id="SSF52218">
    <property type="entry name" value="Flavoproteins"/>
    <property type="match status" value="1"/>
</dbReference>
<keyword id="KW-0285">Flavoprotein</keyword>
<keyword id="KW-0288">FMN</keyword>
<keyword id="KW-0520">NAD</keyword>
<keyword id="KW-0560">Oxidoreductase</keyword>
<feature type="chain" id="PRO_0000245970" description="FMN-dependent NADH:quinone oxidoreductase">
    <location>
        <begin position="1"/>
        <end position="201"/>
    </location>
</feature>
<feature type="binding site" evidence="1">
    <location>
        <position position="10"/>
    </location>
    <ligand>
        <name>FMN</name>
        <dbReference type="ChEBI" id="CHEBI:58210"/>
    </ligand>
</feature>
<feature type="binding site" evidence="1">
    <location>
        <begin position="16"/>
        <end position="18"/>
    </location>
    <ligand>
        <name>FMN</name>
        <dbReference type="ChEBI" id="CHEBI:58210"/>
    </ligand>
</feature>
<feature type="binding site" evidence="1">
    <location>
        <begin position="96"/>
        <end position="99"/>
    </location>
    <ligand>
        <name>FMN</name>
        <dbReference type="ChEBI" id="CHEBI:58210"/>
    </ligand>
</feature>
<feature type="binding site" evidence="1">
    <location>
        <begin position="140"/>
        <end position="143"/>
    </location>
    <ligand>
        <name>FMN</name>
        <dbReference type="ChEBI" id="CHEBI:58210"/>
    </ligand>
</feature>
<comment type="function">
    <text evidence="1">Quinone reductase that provides resistance to thiol-specific stress caused by electrophilic quinones.</text>
</comment>
<comment type="function">
    <text evidence="1">Also exhibits azoreductase activity. Catalyzes the reductive cleavage of the azo bond in aromatic azo compounds to the corresponding amines.</text>
</comment>
<comment type="catalytic activity">
    <reaction evidence="1">
        <text>2 a quinone + NADH + H(+) = 2 a 1,4-benzosemiquinone + NAD(+)</text>
        <dbReference type="Rhea" id="RHEA:65952"/>
        <dbReference type="ChEBI" id="CHEBI:15378"/>
        <dbReference type="ChEBI" id="CHEBI:57540"/>
        <dbReference type="ChEBI" id="CHEBI:57945"/>
        <dbReference type="ChEBI" id="CHEBI:132124"/>
        <dbReference type="ChEBI" id="CHEBI:134225"/>
    </reaction>
</comment>
<comment type="catalytic activity">
    <reaction evidence="1">
        <text>N,N-dimethyl-1,4-phenylenediamine + anthranilate + 2 NAD(+) = 2-(4-dimethylaminophenyl)diazenylbenzoate + 2 NADH + 2 H(+)</text>
        <dbReference type="Rhea" id="RHEA:55872"/>
        <dbReference type="ChEBI" id="CHEBI:15378"/>
        <dbReference type="ChEBI" id="CHEBI:15783"/>
        <dbReference type="ChEBI" id="CHEBI:16567"/>
        <dbReference type="ChEBI" id="CHEBI:57540"/>
        <dbReference type="ChEBI" id="CHEBI:57945"/>
        <dbReference type="ChEBI" id="CHEBI:71579"/>
        <dbReference type="EC" id="1.7.1.17"/>
    </reaction>
</comment>
<comment type="cofactor">
    <cofactor evidence="1">
        <name>FMN</name>
        <dbReference type="ChEBI" id="CHEBI:58210"/>
    </cofactor>
    <text evidence="1">Binds 1 FMN per subunit.</text>
</comment>
<comment type="subunit">
    <text evidence="1">Homodimer.</text>
</comment>
<comment type="similarity">
    <text evidence="1">Belongs to the azoreductase type 1 family.</text>
</comment>
<gene>
    <name evidence="1" type="primary">azoR</name>
    <name type="ordered locus">SBO_1675</name>
</gene>
<organism>
    <name type="scientific">Shigella boydii serotype 4 (strain Sb227)</name>
    <dbReference type="NCBI Taxonomy" id="300268"/>
    <lineage>
        <taxon>Bacteria</taxon>
        <taxon>Pseudomonadati</taxon>
        <taxon>Pseudomonadota</taxon>
        <taxon>Gammaproteobacteria</taxon>
        <taxon>Enterobacterales</taxon>
        <taxon>Enterobacteriaceae</taxon>
        <taxon>Shigella</taxon>
    </lineage>
</organism>
<protein>
    <recommendedName>
        <fullName evidence="1">FMN-dependent NADH:quinone oxidoreductase</fullName>
        <ecNumber evidence="1">1.6.5.-</ecNumber>
    </recommendedName>
    <alternativeName>
        <fullName evidence="1">Azo-dye reductase</fullName>
    </alternativeName>
    <alternativeName>
        <fullName evidence="1">FMN-dependent NADH-azo compound oxidoreductase</fullName>
    </alternativeName>
    <alternativeName>
        <fullName evidence="1">FMN-dependent NADH-azoreductase</fullName>
        <ecNumber evidence="1">1.7.1.17</ecNumber>
    </alternativeName>
</protein>
<sequence>MSKVLVLKSSILAGYSQSNQLSDYFVEQWREKHSADEITVRDLAANPIPVLDGELVGALRPSDAPLTPRQQEALALSDELIAELKAHDVIVIAAPMYNFNISTQLKNYFDLVARAGVTFRYTENGPEGLVTGKKAIVITSRGGIHKDGPTDLVTPYLSTFLGFIGITDVKFVFAEGIAYGPEMAAKAQSDAKAAIDSIVAA</sequence>
<proteinExistence type="inferred from homology"/>